<accession>Q2NV80</accession>
<protein>
    <recommendedName>
        <fullName evidence="1">Trigger factor</fullName>
        <shortName evidence="1">TF</shortName>
        <ecNumber evidence="1">5.2.1.8</ecNumber>
    </recommendedName>
    <alternativeName>
        <fullName evidence="1">PPIase</fullName>
    </alternativeName>
</protein>
<keyword id="KW-0131">Cell cycle</keyword>
<keyword id="KW-0132">Cell division</keyword>
<keyword id="KW-0143">Chaperone</keyword>
<keyword id="KW-0963">Cytoplasm</keyword>
<keyword id="KW-0413">Isomerase</keyword>
<keyword id="KW-0697">Rotamase</keyword>
<dbReference type="EC" id="5.2.1.8" evidence="1"/>
<dbReference type="EMBL" id="AP008232">
    <property type="protein sequence ID" value="BAE73945.1"/>
    <property type="molecule type" value="Genomic_DNA"/>
</dbReference>
<dbReference type="RefSeq" id="WP_011410533.1">
    <property type="nucleotide sequence ID" value="NC_007712.1"/>
</dbReference>
<dbReference type="SMR" id="Q2NV80"/>
<dbReference type="STRING" id="343509.SG0670"/>
<dbReference type="KEGG" id="sgl:SG0670"/>
<dbReference type="eggNOG" id="COG0544">
    <property type="taxonomic scope" value="Bacteria"/>
</dbReference>
<dbReference type="HOGENOM" id="CLU_033058_2_0_6"/>
<dbReference type="OrthoDB" id="9767721at2"/>
<dbReference type="BioCyc" id="SGLO343509:SGP1_RS05760-MONOMER"/>
<dbReference type="Proteomes" id="UP000001932">
    <property type="component" value="Chromosome"/>
</dbReference>
<dbReference type="GO" id="GO:0005737">
    <property type="term" value="C:cytoplasm"/>
    <property type="evidence" value="ECO:0007669"/>
    <property type="project" value="UniProtKB-SubCell"/>
</dbReference>
<dbReference type="GO" id="GO:0003755">
    <property type="term" value="F:peptidyl-prolyl cis-trans isomerase activity"/>
    <property type="evidence" value="ECO:0007669"/>
    <property type="project" value="UniProtKB-UniRule"/>
</dbReference>
<dbReference type="GO" id="GO:0044183">
    <property type="term" value="F:protein folding chaperone"/>
    <property type="evidence" value="ECO:0007669"/>
    <property type="project" value="TreeGrafter"/>
</dbReference>
<dbReference type="GO" id="GO:0043022">
    <property type="term" value="F:ribosome binding"/>
    <property type="evidence" value="ECO:0007669"/>
    <property type="project" value="TreeGrafter"/>
</dbReference>
<dbReference type="GO" id="GO:0051083">
    <property type="term" value="P:'de novo' cotranslational protein folding"/>
    <property type="evidence" value="ECO:0007669"/>
    <property type="project" value="TreeGrafter"/>
</dbReference>
<dbReference type="GO" id="GO:0051301">
    <property type="term" value="P:cell division"/>
    <property type="evidence" value="ECO:0007669"/>
    <property type="project" value="UniProtKB-KW"/>
</dbReference>
<dbReference type="GO" id="GO:0061077">
    <property type="term" value="P:chaperone-mediated protein folding"/>
    <property type="evidence" value="ECO:0007669"/>
    <property type="project" value="TreeGrafter"/>
</dbReference>
<dbReference type="GO" id="GO:0015031">
    <property type="term" value="P:protein transport"/>
    <property type="evidence" value="ECO:0007669"/>
    <property type="project" value="UniProtKB-UniRule"/>
</dbReference>
<dbReference type="GO" id="GO:0043335">
    <property type="term" value="P:protein unfolding"/>
    <property type="evidence" value="ECO:0007669"/>
    <property type="project" value="TreeGrafter"/>
</dbReference>
<dbReference type="FunFam" id="3.10.50.40:FF:000001">
    <property type="entry name" value="Trigger factor"/>
    <property type="match status" value="1"/>
</dbReference>
<dbReference type="FunFam" id="3.30.70.1050:FF:000001">
    <property type="entry name" value="Trigger factor"/>
    <property type="match status" value="1"/>
</dbReference>
<dbReference type="Gene3D" id="3.10.50.40">
    <property type="match status" value="1"/>
</dbReference>
<dbReference type="Gene3D" id="3.30.70.1050">
    <property type="entry name" value="Trigger factor ribosome-binding domain"/>
    <property type="match status" value="1"/>
</dbReference>
<dbReference type="Gene3D" id="1.10.3120.10">
    <property type="entry name" value="Trigger factor, C-terminal domain"/>
    <property type="match status" value="1"/>
</dbReference>
<dbReference type="HAMAP" id="MF_00303">
    <property type="entry name" value="Trigger_factor_Tig"/>
    <property type="match status" value="1"/>
</dbReference>
<dbReference type="InterPro" id="IPR046357">
    <property type="entry name" value="PPIase_dom_sf"/>
</dbReference>
<dbReference type="InterPro" id="IPR001179">
    <property type="entry name" value="PPIase_FKBP_dom"/>
</dbReference>
<dbReference type="InterPro" id="IPR005215">
    <property type="entry name" value="Trig_fac"/>
</dbReference>
<dbReference type="InterPro" id="IPR008880">
    <property type="entry name" value="Trigger_fac_C"/>
</dbReference>
<dbReference type="InterPro" id="IPR037041">
    <property type="entry name" value="Trigger_fac_C_sf"/>
</dbReference>
<dbReference type="InterPro" id="IPR008881">
    <property type="entry name" value="Trigger_fac_ribosome-bd_bac"/>
</dbReference>
<dbReference type="InterPro" id="IPR036611">
    <property type="entry name" value="Trigger_fac_ribosome-bd_sf"/>
</dbReference>
<dbReference type="InterPro" id="IPR027304">
    <property type="entry name" value="Trigger_fact/SurA_dom_sf"/>
</dbReference>
<dbReference type="NCBIfam" id="TIGR00115">
    <property type="entry name" value="tig"/>
    <property type="match status" value="1"/>
</dbReference>
<dbReference type="PANTHER" id="PTHR30560">
    <property type="entry name" value="TRIGGER FACTOR CHAPERONE AND PEPTIDYL-PROLYL CIS/TRANS ISOMERASE"/>
    <property type="match status" value="1"/>
</dbReference>
<dbReference type="PANTHER" id="PTHR30560:SF3">
    <property type="entry name" value="TRIGGER FACTOR-LIKE PROTEIN TIG, CHLOROPLASTIC"/>
    <property type="match status" value="1"/>
</dbReference>
<dbReference type="Pfam" id="PF00254">
    <property type="entry name" value="FKBP_C"/>
    <property type="match status" value="1"/>
</dbReference>
<dbReference type="Pfam" id="PF05698">
    <property type="entry name" value="Trigger_C"/>
    <property type="match status" value="1"/>
</dbReference>
<dbReference type="Pfam" id="PF05697">
    <property type="entry name" value="Trigger_N"/>
    <property type="match status" value="1"/>
</dbReference>
<dbReference type="PIRSF" id="PIRSF003095">
    <property type="entry name" value="Trigger_factor"/>
    <property type="match status" value="1"/>
</dbReference>
<dbReference type="SUPFAM" id="SSF54534">
    <property type="entry name" value="FKBP-like"/>
    <property type="match status" value="1"/>
</dbReference>
<dbReference type="SUPFAM" id="SSF109998">
    <property type="entry name" value="Triger factor/SurA peptide-binding domain-like"/>
    <property type="match status" value="1"/>
</dbReference>
<dbReference type="SUPFAM" id="SSF102735">
    <property type="entry name" value="Trigger factor ribosome-binding domain"/>
    <property type="match status" value="1"/>
</dbReference>
<dbReference type="PROSITE" id="PS50059">
    <property type="entry name" value="FKBP_PPIASE"/>
    <property type="match status" value="1"/>
</dbReference>
<sequence length="434" mass="48208">MQVSVETTEGLGRRVNITVAADTIEQAVKSELVNVAKKVCIDGFRKGKVPMNIVAQRYGASVRQDVLGDLMQRNFVDAIIQEKINPVGAPNYVPGEYKTGEDFSYAVEFEVYPEVELMGLDTIEVEKPRVEVKDADVDTMLDTLQKQQADWKETTDAAGAEDRVTVDFTGTIDGEAFDGGKATDFVLAMGQGRMIPGFEEGVIGHKAGESFDISVTFPEDYHAENLKGKAAKFAVELKKVEQRELPELDEAFIKRFGVADVSLEGLRAEVRKNMERELKNAVRNRVKTQVIDGLLNANDIHVPAALVDGEIDVLKRQAAQRFGGNEKQALELPRELFEEQAKRRVKVGLLLGEVIRKHELKADEARVSALIEEMASAYEDPKEVIEFYGKNKELMDNMRNVALEEQAVEALLANSRVTEKETGFNELMNQPSAA</sequence>
<evidence type="ECO:0000255" key="1">
    <source>
        <dbReference type="HAMAP-Rule" id="MF_00303"/>
    </source>
</evidence>
<proteinExistence type="inferred from homology"/>
<reference key="1">
    <citation type="journal article" date="2006" name="Genome Res.">
        <title>Massive genome erosion and functional adaptations provide insights into the symbiotic lifestyle of Sodalis glossinidius in the tsetse host.</title>
        <authorList>
            <person name="Toh H."/>
            <person name="Weiss B.L."/>
            <person name="Perkin S.A.H."/>
            <person name="Yamashita A."/>
            <person name="Oshima K."/>
            <person name="Hattori M."/>
            <person name="Aksoy S."/>
        </authorList>
    </citation>
    <scope>NUCLEOTIDE SEQUENCE [LARGE SCALE GENOMIC DNA]</scope>
    <source>
        <strain>morsitans</strain>
    </source>
</reference>
<name>TIG_SODGM</name>
<comment type="function">
    <text evidence="1">Involved in protein export. Acts as a chaperone by maintaining the newly synthesized protein in an open conformation. Functions as a peptidyl-prolyl cis-trans isomerase.</text>
</comment>
<comment type="catalytic activity">
    <reaction evidence="1">
        <text>[protein]-peptidylproline (omega=180) = [protein]-peptidylproline (omega=0)</text>
        <dbReference type="Rhea" id="RHEA:16237"/>
        <dbReference type="Rhea" id="RHEA-COMP:10747"/>
        <dbReference type="Rhea" id="RHEA-COMP:10748"/>
        <dbReference type="ChEBI" id="CHEBI:83833"/>
        <dbReference type="ChEBI" id="CHEBI:83834"/>
        <dbReference type="EC" id="5.2.1.8"/>
    </reaction>
</comment>
<comment type="subcellular location">
    <subcellularLocation>
        <location>Cytoplasm</location>
    </subcellularLocation>
    <text evidence="1">About half TF is bound to the ribosome near the polypeptide exit tunnel while the other half is free in the cytoplasm.</text>
</comment>
<comment type="domain">
    <text evidence="1">Consists of 3 domains; the N-terminus binds the ribosome, the middle domain has PPIase activity, while the C-terminus has intrinsic chaperone activity on its own.</text>
</comment>
<comment type="similarity">
    <text evidence="1">Belongs to the FKBP-type PPIase family. Tig subfamily.</text>
</comment>
<feature type="chain" id="PRO_0000256619" description="Trigger factor">
    <location>
        <begin position="1"/>
        <end position="434"/>
    </location>
</feature>
<feature type="domain" description="PPIase FKBP-type" evidence="1">
    <location>
        <begin position="161"/>
        <end position="246"/>
    </location>
</feature>
<organism>
    <name type="scientific">Sodalis glossinidius (strain morsitans)</name>
    <dbReference type="NCBI Taxonomy" id="343509"/>
    <lineage>
        <taxon>Bacteria</taxon>
        <taxon>Pseudomonadati</taxon>
        <taxon>Pseudomonadota</taxon>
        <taxon>Gammaproteobacteria</taxon>
        <taxon>Enterobacterales</taxon>
        <taxon>Bruguierivoracaceae</taxon>
        <taxon>Sodalis</taxon>
    </lineage>
</organism>
<gene>
    <name evidence="1" type="primary">tig</name>
    <name type="ordered locus">SG0670</name>
</gene>